<feature type="chain" id="PRO_1000187161" description="D-ribose pyranase">
    <location>
        <begin position="1"/>
        <end position="139"/>
    </location>
</feature>
<feature type="active site" description="Proton donor" evidence="1">
    <location>
        <position position="20"/>
    </location>
</feature>
<feature type="binding site" evidence="1">
    <location>
        <position position="28"/>
    </location>
    <ligand>
        <name>substrate</name>
    </ligand>
</feature>
<feature type="binding site" evidence="1">
    <location>
        <position position="106"/>
    </location>
    <ligand>
        <name>substrate</name>
    </ligand>
</feature>
<feature type="binding site" evidence="1">
    <location>
        <begin position="128"/>
        <end position="130"/>
    </location>
    <ligand>
        <name>substrate</name>
    </ligand>
</feature>
<keyword id="KW-0119">Carbohydrate metabolism</keyword>
<keyword id="KW-0963">Cytoplasm</keyword>
<keyword id="KW-0413">Isomerase</keyword>
<accession>B5RFU7</accession>
<comment type="function">
    <text evidence="1">Catalyzes the interconversion of beta-pyran and beta-furan forms of D-ribose.</text>
</comment>
<comment type="catalytic activity">
    <reaction evidence="1">
        <text>beta-D-ribopyranose = beta-D-ribofuranose</text>
        <dbReference type="Rhea" id="RHEA:25432"/>
        <dbReference type="ChEBI" id="CHEBI:27476"/>
        <dbReference type="ChEBI" id="CHEBI:47002"/>
        <dbReference type="EC" id="5.4.99.62"/>
    </reaction>
</comment>
<comment type="pathway">
    <text evidence="1">Carbohydrate metabolism; D-ribose degradation; D-ribose 5-phosphate from beta-D-ribopyranose: step 1/2.</text>
</comment>
<comment type="subunit">
    <text evidence="1">Homodecamer.</text>
</comment>
<comment type="subcellular location">
    <subcellularLocation>
        <location evidence="1">Cytoplasm</location>
    </subcellularLocation>
</comment>
<comment type="similarity">
    <text evidence="1">Belongs to the RbsD / FucU family. RbsD subfamily.</text>
</comment>
<dbReference type="EC" id="5.4.99.62" evidence="1"/>
<dbReference type="EMBL" id="AM933173">
    <property type="protein sequence ID" value="CAR39341.1"/>
    <property type="molecule type" value="Genomic_DNA"/>
</dbReference>
<dbReference type="RefSeq" id="WP_000715944.1">
    <property type="nucleotide sequence ID" value="NC_011274.1"/>
</dbReference>
<dbReference type="SMR" id="B5RFU7"/>
<dbReference type="KEGG" id="seg:SG3552"/>
<dbReference type="HOGENOM" id="CLU_135498_0_0_6"/>
<dbReference type="UniPathway" id="UPA00916">
    <property type="reaction ID" value="UER00888"/>
</dbReference>
<dbReference type="Proteomes" id="UP000008321">
    <property type="component" value="Chromosome"/>
</dbReference>
<dbReference type="GO" id="GO:0005829">
    <property type="term" value="C:cytosol"/>
    <property type="evidence" value="ECO:0007669"/>
    <property type="project" value="TreeGrafter"/>
</dbReference>
<dbReference type="GO" id="GO:0062193">
    <property type="term" value="F:D-ribose pyranase activity"/>
    <property type="evidence" value="ECO:0007669"/>
    <property type="project" value="UniProtKB-EC"/>
</dbReference>
<dbReference type="GO" id="GO:0016872">
    <property type="term" value="F:intramolecular lyase activity"/>
    <property type="evidence" value="ECO:0007669"/>
    <property type="project" value="UniProtKB-UniRule"/>
</dbReference>
<dbReference type="GO" id="GO:0048029">
    <property type="term" value="F:monosaccharide binding"/>
    <property type="evidence" value="ECO:0007669"/>
    <property type="project" value="InterPro"/>
</dbReference>
<dbReference type="GO" id="GO:0019303">
    <property type="term" value="P:D-ribose catabolic process"/>
    <property type="evidence" value="ECO:0007669"/>
    <property type="project" value="UniProtKB-UniRule"/>
</dbReference>
<dbReference type="FunFam" id="3.40.1650.10:FF:000002">
    <property type="entry name" value="D-ribose pyranase"/>
    <property type="match status" value="1"/>
</dbReference>
<dbReference type="Gene3D" id="3.40.1650.10">
    <property type="entry name" value="RbsD-like domain"/>
    <property type="match status" value="1"/>
</dbReference>
<dbReference type="HAMAP" id="MF_01661">
    <property type="entry name" value="D_rib_pyranase"/>
    <property type="match status" value="1"/>
</dbReference>
<dbReference type="InterPro" id="IPR023064">
    <property type="entry name" value="D-ribose_pyranase"/>
</dbReference>
<dbReference type="InterPro" id="IPR023750">
    <property type="entry name" value="RbsD-like_sf"/>
</dbReference>
<dbReference type="InterPro" id="IPR007721">
    <property type="entry name" value="RbsD_FucU"/>
</dbReference>
<dbReference type="NCBIfam" id="NF008761">
    <property type="entry name" value="PRK11797.1"/>
    <property type="match status" value="1"/>
</dbReference>
<dbReference type="PANTHER" id="PTHR37831">
    <property type="entry name" value="D-RIBOSE PYRANASE"/>
    <property type="match status" value="1"/>
</dbReference>
<dbReference type="PANTHER" id="PTHR37831:SF1">
    <property type="entry name" value="D-RIBOSE PYRANASE"/>
    <property type="match status" value="1"/>
</dbReference>
<dbReference type="Pfam" id="PF05025">
    <property type="entry name" value="RbsD_FucU"/>
    <property type="match status" value="1"/>
</dbReference>
<dbReference type="SUPFAM" id="SSF102546">
    <property type="entry name" value="RbsD-like"/>
    <property type="match status" value="1"/>
</dbReference>
<sequence length="139" mass="15189">MKKGTVLNSEISSVISRLGHTDTLVVCDAGLPIPNSTARIDMALTQGVPSFMQVVDVVTREMQVEAAILATEIKQQNPQLHETLLTHLEQLQQHQGNTIKISYTTHEQFKKLTADSQAVIRSGECSPYANVILCAGVTF</sequence>
<name>RBSD_SALG2</name>
<evidence type="ECO:0000255" key="1">
    <source>
        <dbReference type="HAMAP-Rule" id="MF_01661"/>
    </source>
</evidence>
<organism>
    <name type="scientific">Salmonella gallinarum (strain 287/91 / NCTC 13346)</name>
    <dbReference type="NCBI Taxonomy" id="550538"/>
    <lineage>
        <taxon>Bacteria</taxon>
        <taxon>Pseudomonadati</taxon>
        <taxon>Pseudomonadota</taxon>
        <taxon>Gammaproteobacteria</taxon>
        <taxon>Enterobacterales</taxon>
        <taxon>Enterobacteriaceae</taxon>
        <taxon>Salmonella</taxon>
    </lineage>
</organism>
<gene>
    <name evidence="1" type="primary">rbsD</name>
    <name type="ordered locus">SG3552</name>
</gene>
<reference key="1">
    <citation type="journal article" date="2008" name="Genome Res.">
        <title>Comparative genome analysis of Salmonella enteritidis PT4 and Salmonella gallinarum 287/91 provides insights into evolutionary and host adaptation pathways.</title>
        <authorList>
            <person name="Thomson N.R."/>
            <person name="Clayton D.J."/>
            <person name="Windhorst D."/>
            <person name="Vernikos G."/>
            <person name="Davidson S."/>
            <person name="Churcher C."/>
            <person name="Quail M.A."/>
            <person name="Stevens M."/>
            <person name="Jones M.A."/>
            <person name="Watson M."/>
            <person name="Barron A."/>
            <person name="Layton A."/>
            <person name="Pickard D."/>
            <person name="Kingsley R.A."/>
            <person name="Bignell A."/>
            <person name="Clark L."/>
            <person name="Harris B."/>
            <person name="Ormond D."/>
            <person name="Abdellah Z."/>
            <person name="Brooks K."/>
            <person name="Cherevach I."/>
            <person name="Chillingworth T."/>
            <person name="Woodward J."/>
            <person name="Norberczak H."/>
            <person name="Lord A."/>
            <person name="Arrowsmith C."/>
            <person name="Jagels K."/>
            <person name="Moule S."/>
            <person name="Mungall K."/>
            <person name="Saunders M."/>
            <person name="Whitehead S."/>
            <person name="Chabalgoity J.A."/>
            <person name="Maskell D."/>
            <person name="Humphreys T."/>
            <person name="Roberts M."/>
            <person name="Barrow P.A."/>
            <person name="Dougan G."/>
            <person name="Parkhill J."/>
        </authorList>
    </citation>
    <scope>NUCLEOTIDE SEQUENCE [LARGE SCALE GENOMIC DNA]</scope>
    <source>
        <strain>287/91 / NCTC 13346</strain>
    </source>
</reference>
<proteinExistence type="inferred from homology"/>
<protein>
    <recommendedName>
        <fullName evidence="1">D-ribose pyranase</fullName>
        <ecNumber evidence="1">5.4.99.62</ecNumber>
    </recommendedName>
</protein>